<organism>
    <name type="scientific">Rhodopseudomonas palustris (strain BisB18)</name>
    <dbReference type="NCBI Taxonomy" id="316056"/>
    <lineage>
        <taxon>Bacteria</taxon>
        <taxon>Pseudomonadati</taxon>
        <taxon>Pseudomonadota</taxon>
        <taxon>Alphaproteobacteria</taxon>
        <taxon>Hyphomicrobiales</taxon>
        <taxon>Nitrobacteraceae</taxon>
        <taxon>Rhodopseudomonas</taxon>
    </lineage>
</organism>
<keyword id="KW-0028">Amino-acid biosynthesis</keyword>
<keyword id="KW-0057">Aromatic amino acid biosynthesis</keyword>
<keyword id="KW-0170">Cobalt</keyword>
<keyword id="KW-0963">Cytoplasm</keyword>
<keyword id="KW-0456">Lyase</keyword>
<keyword id="KW-0479">Metal-binding</keyword>
<keyword id="KW-0520">NAD</keyword>
<keyword id="KW-0547">Nucleotide-binding</keyword>
<keyword id="KW-0862">Zinc</keyword>
<dbReference type="EC" id="4.2.3.4" evidence="1"/>
<dbReference type="EMBL" id="CP000301">
    <property type="protein sequence ID" value="ABD86108.1"/>
    <property type="molecule type" value="Genomic_DNA"/>
</dbReference>
<dbReference type="SMR" id="Q21BX8"/>
<dbReference type="STRING" id="316056.RPC_0533"/>
<dbReference type="KEGG" id="rpc:RPC_0533"/>
<dbReference type="eggNOG" id="COG0337">
    <property type="taxonomic scope" value="Bacteria"/>
</dbReference>
<dbReference type="HOGENOM" id="CLU_001201_0_2_5"/>
<dbReference type="OrthoDB" id="9806583at2"/>
<dbReference type="UniPathway" id="UPA00053">
    <property type="reaction ID" value="UER00085"/>
</dbReference>
<dbReference type="GO" id="GO:0005737">
    <property type="term" value="C:cytoplasm"/>
    <property type="evidence" value="ECO:0007669"/>
    <property type="project" value="UniProtKB-SubCell"/>
</dbReference>
<dbReference type="GO" id="GO:0003856">
    <property type="term" value="F:3-dehydroquinate synthase activity"/>
    <property type="evidence" value="ECO:0007669"/>
    <property type="project" value="UniProtKB-UniRule"/>
</dbReference>
<dbReference type="GO" id="GO:0046872">
    <property type="term" value="F:metal ion binding"/>
    <property type="evidence" value="ECO:0007669"/>
    <property type="project" value="UniProtKB-KW"/>
</dbReference>
<dbReference type="GO" id="GO:0000166">
    <property type="term" value="F:nucleotide binding"/>
    <property type="evidence" value="ECO:0007669"/>
    <property type="project" value="UniProtKB-KW"/>
</dbReference>
<dbReference type="GO" id="GO:0008652">
    <property type="term" value="P:amino acid biosynthetic process"/>
    <property type="evidence" value="ECO:0007669"/>
    <property type="project" value="UniProtKB-KW"/>
</dbReference>
<dbReference type="GO" id="GO:0009073">
    <property type="term" value="P:aromatic amino acid family biosynthetic process"/>
    <property type="evidence" value="ECO:0007669"/>
    <property type="project" value="UniProtKB-KW"/>
</dbReference>
<dbReference type="GO" id="GO:0009423">
    <property type="term" value="P:chorismate biosynthetic process"/>
    <property type="evidence" value="ECO:0007669"/>
    <property type="project" value="UniProtKB-UniRule"/>
</dbReference>
<dbReference type="CDD" id="cd08195">
    <property type="entry name" value="DHQS"/>
    <property type="match status" value="1"/>
</dbReference>
<dbReference type="FunFam" id="3.40.50.1970:FF:000007">
    <property type="entry name" value="Pentafunctional AROM polypeptide"/>
    <property type="match status" value="1"/>
</dbReference>
<dbReference type="Gene3D" id="3.40.50.1970">
    <property type="match status" value="1"/>
</dbReference>
<dbReference type="Gene3D" id="1.20.1090.10">
    <property type="entry name" value="Dehydroquinate synthase-like - alpha domain"/>
    <property type="match status" value="1"/>
</dbReference>
<dbReference type="HAMAP" id="MF_00110">
    <property type="entry name" value="DHQ_synthase"/>
    <property type="match status" value="1"/>
</dbReference>
<dbReference type="InterPro" id="IPR050071">
    <property type="entry name" value="Dehydroquinate_synthase"/>
</dbReference>
<dbReference type="InterPro" id="IPR016037">
    <property type="entry name" value="DHQ_synth_AroB"/>
</dbReference>
<dbReference type="InterPro" id="IPR030963">
    <property type="entry name" value="DHQ_synth_fam"/>
</dbReference>
<dbReference type="InterPro" id="IPR030960">
    <property type="entry name" value="DHQS/DOIS_N"/>
</dbReference>
<dbReference type="InterPro" id="IPR056179">
    <property type="entry name" value="DHQS_C"/>
</dbReference>
<dbReference type="NCBIfam" id="TIGR01357">
    <property type="entry name" value="aroB"/>
    <property type="match status" value="1"/>
</dbReference>
<dbReference type="PANTHER" id="PTHR43622">
    <property type="entry name" value="3-DEHYDROQUINATE SYNTHASE"/>
    <property type="match status" value="1"/>
</dbReference>
<dbReference type="PANTHER" id="PTHR43622:SF7">
    <property type="entry name" value="3-DEHYDROQUINATE SYNTHASE, CHLOROPLASTIC"/>
    <property type="match status" value="1"/>
</dbReference>
<dbReference type="Pfam" id="PF01761">
    <property type="entry name" value="DHQ_synthase"/>
    <property type="match status" value="1"/>
</dbReference>
<dbReference type="Pfam" id="PF24621">
    <property type="entry name" value="DHQS_C"/>
    <property type="match status" value="1"/>
</dbReference>
<dbReference type="PIRSF" id="PIRSF001455">
    <property type="entry name" value="DHQ_synth"/>
    <property type="match status" value="1"/>
</dbReference>
<dbReference type="SUPFAM" id="SSF56796">
    <property type="entry name" value="Dehydroquinate synthase-like"/>
    <property type="match status" value="1"/>
</dbReference>
<gene>
    <name evidence="1" type="primary">aroB</name>
    <name type="ordered locus">RPC_0533</name>
</gene>
<proteinExistence type="inferred from homology"/>
<reference key="1">
    <citation type="submission" date="2006-03" db="EMBL/GenBank/DDBJ databases">
        <title>Complete sequence of Rhodopseudomonas palustris BisB18.</title>
        <authorList>
            <consortium name="US DOE Joint Genome Institute"/>
            <person name="Copeland A."/>
            <person name="Lucas S."/>
            <person name="Lapidus A."/>
            <person name="Barry K."/>
            <person name="Detter J.C."/>
            <person name="Glavina del Rio T."/>
            <person name="Hammon N."/>
            <person name="Israni S."/>
            <person name="Dalin E."/>
            <person name="Tice H."/>
            <person name="Pitluck S."/>
            <person name="Chain P."/>
            <person name="Malfatti S."/>
            <person name="Shin M."/>
            <person name="Vergez L."/>
            <person name="Schmutz J."/>
            <person name="Larimer F."/>
            <person name="Land M."/>
            <person name="Hauser L."/>
            <person name="Pelletier D.A."/>
            <person name="Kyrpides N."/>
            <person name="Anderson I."/>
            <person name="Oda Y."/>
            <person name="Harwood C.S."/>
            <person name="Richardson P."/>
        </authorList>
    </citation>
    <scope>NUCLEOTIDE SEQUENCE [LARGE SCALE GENOMIC DNA]</scope>
    <source>
        <strain>BisB18</strain>
    </source>
</reference>
<accession>Q21BX8</accession>
<protein>
    <recommendedName>
        <fullName evidence="1">3-dehydroquinate synthase</fullName>
        <shortName evidence="1">DHQS</shortName>
        <ecNumber evidence="1">4.2.3.4</ecNumber>
    </recommendedName>
</protein>
<comment type="function">
    <text evidence="1">Catalyzes the conversion of 3-deoxy-D-arabino-heptulosonate 7-phosphate (DAHP) to dehydroquinate (DHQ).</text>
</comment>
<comment type="catalytic activity">
    <reaction evidence="1">
        <text>7-phospho-2-dehydro-3-deoxy-D-arabino-heptonate = 3-dehydroquinate + phosphate</text>
        <dbReference type="Rhea" id="RHEA:21968"/>
        <dbReference type="ChEBI" id="CHEBI:32364"/>
        <dbReference type="ChEBI" id="CHEBI:43474"/>
        <dbReference type="ChEBI" id="CHEBI:58394"/>
        <dbReference type="EC" id="4.2.3.4"/>
    </reaction>
</comment>
<comment type="cofactor">
    <cofactor evidence="1">
        <name>Co(2+)</name>
        <dbReference type="ChEBI" id="CHEBI:48828"/>
    </cofactor>
    <cofactor evidence="1">
        <name>Zn(2+)</name>
        <dbReference type="ChEBI" id="CHEBI:29105"/>
    </cofactor>
    <text evidence="1">Binds 1 divalent metal cation per subunit. Can use either Co(2+) or Zn(2+).</text>
</comment>
<comment type="cofactor">
    <cofactor evidence="1">
        <name>NAD(+)</name>
        <dbReference type="ChEBI" id="CHEBI:57540"/>
    </cofactor>
</comment>
<comment type="pathway">
    <text evidence="1">Metabolic intermediate biosynthesis; chorismate biosynthesis; chorismate from D-erythrose 4-phosphate and phosphoenolpyruvate: step 2/7.</text>
</comment>
<comment type="subcellular location">
    <subcellularLocation>
        <location evidence="1">Cytoplasm</location>
    </subcellularLocation>
</comment>
<comment type="similarity">
    <text evidence="1">Belongs to the sugar phosphate cyclases superfamily. Dehydroquinate synthase family.</text>
</comment>
<sequence>MTAPLNHSAPITVEVALGDRGYDIVIGRDVLRSLGTRIAALRPGARTAIVTDRNVATCWLAQTQAALDDVGIVSMPIVVEGGEGSKSYAGLQQVCEALIAAKIERNDLVIALGGGVVGDLAGFAASIVRRGLDFVQVPTSLLAQVDSSVGGKTGINSPHGKNLVGAFHQPVLVIADTAVLDTLSPRQFRAGYAEVAKYGALGDEAFFAWLEANHAEIVRGGSAREHAIATSCRAKAAIVARDERETGERALLNLGHTFGHALEAATGFSERLFHGEGVAVGMVLAAQFSAERGMLSNDAAARLSHHLAEVGLPTRLQDIAGFAQEGLADADALMALMAQDKKVKRGRLTFILLEAIGRAVIAHDVEPEPVRDFLARKLADKT</sequence>
<name>AROB_RHOPB</name>
<evidence type="ECO:0000255" key="1">
    <source>
        <dbReference type="HAMAP-Rule" id="MF_00110"/>
    </source>
</evidence>
<feature type="chain" id="PRO_1000094586" description="3-dehydroquinate synthase">
    <location>
        <begin position="1"/>
        <end position="382"/>
    </location>
</feature>
<feature type="binding site" evidence="1">
    <location>
        <begin position="115"/>
        <end position="119"/>
    </location>
    <ligand>
        <name>NAD(+)</name>
        <dbReference type="ChEBI" id="CHEBI:57540"/>
    </ligand>
</feature>
<feature type="binding site" evidence="1">
    <location>
        <begin position="139"/>
        <end position="140"/>
    </location>
    <ligand>
        <name>NAD(+)</name>
        <dbReference type="ChEBI" id="CHEBI:57540"/>
    </ligand>
</feature>
<feature type="binding site" evidence="1">
    <location>
        <position position="152"/>
    </location>
    <ligand>
        <name>NAD(+)</name>
        <dbReference type="ChEBI" id="CHEBI:57540"/>
    </ligand>
</feature>
<feature type="binding site" evidence="1">
    <location>
        <position position="161"/>
    </location>
    <ligand>
        <name>NAD(+)</name>
        <dbReference type="ChEBI" id="CHEBI:57540"/>
    </ligand>
</feature>
<feature type="binding site" evidence="1">
    <location>
        <position position="194"/>
    </location>
    <ligand>
        <name>Zn(2+)</name>
        <dbReference type="ChEBI" id="CHEBI:29105"/>
    </ligand>
</feature>
<feature type="binding site" evidence="1">
    <location>
        <position position="256"/>
    </location>
    <ligand>
        <name>Zn(2+)</name>
        <dbReference type="ChEBI" id="CHEBI:29105"/>
    </ligand>
</feature>
<feature type="binding site" evidence="1">
    <location>
        <position position="274"/>
    </location>
    <ligand>
        <name>Zn(2+)</name>
        <dbReference type="ChEBI" id="CHEBI:29105"/>
    </ligand>
</feature>